<evidence type="ECO:0000250" key="1"/>
<evidence type="ECO:0000250" key="2">
    <source>
        <dbReference type="UniProtKB" id="Q80U56"/>
    </source>
</evidence>
<evidence type="ECO:0000250" key="3">
    <source>
        <dbReference type="UniProtKB" id="Q8NBF6"/>
    </source>
</evidence>
<evidence type="ECO:0000255" key="4"/>
<evidence type="ECO:0000255" key="5">
    <source>
        <dbReference type="PROSITE-ProRule" id="PRU00304"/>
    </source>
</evidence>
<evidence type="ECO:0000256" key="6">
    <source>
        <dbReference type="SAM" id="MobiDB-lite"/>
    </source>
</evidence>
<evidence type="ECO:0000305" key="7"/>
<organism>
    <name type="scientific">Pongo abelii</name>
    <name type="common">Sumatran orangutan</name>
    <name type="synonym">Pongo pygmaeus abelii</name>
    <dbReference type="NCBI Taxonomy" id="9601"/>
    <lineage>
        <taxon>Eukaryota</taxon>
        <taxon>Metazoa</taxon>
        <taxon>Chordata</taxon>
        <taxon>Craniata</taxon>
        <taxon>Vertebrata</taxon>
        <taxon>Euteleostomi</taxon>
        <taxon>Mammalia</taxon>
        <taxon>Eutheria</taxon>
        <taxon>Euarchontoglires</taxon>
        <taxon>Primates</taxon>
        <taxon>Haplorrhini</taxon>
        <taxon>Catarrhini</taxon>
        <taxon>Hominidae</taxon>
        <taxon>Pongo</taxon>
    </lineage>
</organism>
<reference key="1">
    <citation type="submission" date="2004-11" db="EMBL/GenBank/DDBJ databases">
        <authorList>
            <consortium name="The German cDNA consortium"/>
        </authorList>
    </citation>
    <scope>NUCLEOTIDE SEQUENCE [LARGE SCALE MRNA]</scope>
    <source>
        <tissue>Brain cortex</tissue>
    </source>
</reference>
<sequence length="630" mass="69642">MEKARRGGDGVPRGPVLHIVVVGFHHKKGCQVEFSYPPLIPGDGHDSHTLPEEWKYLPFLALPDGAHNYQEDTVFFHLPPRNGNGATVFGISCYRQIEAKALKVRQADITRETVQKSVCVLSKLPLYGLLQAKLQLITHAYFEEKDFSQISILKELYEHMNSSLGGASLEGSQVYLGLSPRDLVLHFRHKVLILFKLILLEKKVLFYISPVNKLVGALMTVLSLFPGMIEHGLSDCSQYRPRKSMSEDGGLQESNPCADDFVSASTADVSHTNLGTVRKVIAGNHGEDAAMKTEEPLFQVEDSSKGQEPNDTNQYLKPPSRPSPDSSESDWETLDPSVLEDPNSKEREQLGSDQTNLFPKDSVPSESLPITVQPQANTGQVVLIPGLISGLEEDQYGMPLAIFTKGYLCLPYMALQQHHLLSDVTVRGFVAGATNILFRQQKHLGDAIVEVEEALIQIHDPELRKLLNPTTADLRFADYLVRHVTENRDDVFLDGTGWEGGDEWIRAQFAVYIHALLAATLQLDNEKILSDYGTTFVTAWKNTHDYRVWNSNKHPALAEINPNSVQNSERGKKIGNVMVTTSRNVVQTGKAVGQSVGGAFSSAKTAMSSWLSTFTTSTSQSLTEPPDGKP</sequence>
<name>AVL9_PONAB</name>
<protein>
    <recommendedName>
        <fullName>Late secretory pathway protein AVL9 homolog</fullName>
    </recommendedName>
</protein>
<comment type="function">
    <text evidence="1">Functions in cell migration.</text>
</comment>
<comment type="subcellular location">
    <subcellularLocation>
        <location evidence="1">Recycling endosome</location>
    </subcellularLocation>
    <subcellularLocation>
        <location evidence="7">Membrane</location>
        <topology evidence="7">Single-pass membrane protein</topology>
    </subcellularLocation>
</comment>
<comment type="similarity">
    <text evidence="7">Belongs to the AVL9 family.</text>
</comment>
<proteinExistence type="evidence at transcript level"/>
<keyword id="KW-0967">Endosome</keyword>
<keyword id="KW-0472">Membrane</keyword>
<keyword id="KW-0488">Methylation</keyword>
<keyword id="KW-0597">Phosphoprotein</keyword>
<keyword id="KW-1185">Reference proteome</keyword>
<keyword id="KW-0812">Transmembrane</keyword>
<keyword id="KW-1133">Transmembrane helix</keyword>
<feature type="chain" id="PRO_0000247180" description="Late secretory pathway protein AVL9 homolog">
    <location>
        <begin position="1"/>
        <end position="630"/>
    </location>
</feature>
<feature type="transmembrane region" description="Helical" evidence="4">
    <location>
        <begin position="214"/>
        <end position="230"/>
    </location>
</feature>
<feature type="domain" description="uDENN" evidence="5">
    <location>
        <begin position="17"/>
        <end position="161"/>
    </location>
</feature>
<feature type="domain" description="cDENN" evidence="5">
    <location>
        <begin position="173"/>
        <end position="340"/>
    </location>
</feature>
<feature type="domain" description="dDENN" evidence="5">
    <location>
        <begin position="342"/>
        <end position="575"/>
    </location>
</feature>
<feature type="region of interest" description="Disordered" evidence="6">
    <location>
        <begin position="299"/>
        <end position="372"/>
    </location>
</feature>
<feature type="compositionally biased region" description="Polar residues" evidence="6">
    <location>
        <begin position="306"/>
        <end position="315"/>
    </location>
</feature>
<feature type="modified residue" description="Phosphoserine" evidence="2">
    <location>
        <position position="244"/>
    </location>
</feature>
<feature type="modified residue" description="Omega-N-methylarginine" evidence="3">
    <location>
        <position position="570"/>
    </location>
</feature>
<gene>
    <name type="primary">AVL9</name>
</gene>
<dbReference type="EMBL" id="CR859500">
    <property type="protein sequence ID" value="CAH91669.1"/>
    <property type="molecule type" value="mRNA"/>
</dbReference>
<dbReference type="RefSeq" id="NP_001125979.1">
    <property type="nucleotide sequence ID" value="NM_001132507.1"/>
</dbReference>
<dbReference type="STRING" id="9601.ENSPPYP00000019795"/>
<dbReference type="GeneID" id="100172917"/>
<dbReference type="KEGG" id="pon:100172917"/>
<dbReference type="CTD" id="23080"/>
<dbReference type="eggNOG" id="KOG3823">
    <property type="taxonomic scope" value="Eukaryota"/>
</dbReference>
<dbReference type="InParanoid" id="Q5R991"/>
<dbReference type="OrthoDB" id="26278at2759"/>
<dbReference type="Proteomes" id="UP000001595">
    <property type="component" value="Unplaced"/>
</dbReference>
<dbReference type="GO" id="GO:0016020">
    <property type="term" value="C:membrane"/>
    <property type="evidence" value="ECO:0007669"/>
    <property type="project" value="UniProtKB-SubCell"/>
</dbReference>
<dbReference type="GO" id="GO:0055037">
    <property type="term" value="C:recycling endosome"/>
    <property type="evidence" value="ECO:0000250"/>
    <property type="project" value="UniProtKB"/>
</dbReference>
<dbReference type="GO" id="GO:0016477">
    <property type="term" value="P:cell migration"/>
    <property type="evidence" value="ECO:0000250"/>
    <property type="project" value="UniProtKB"/>
</dbReference>
<dbReference type="InterPro" id="IPR018307">
    <property type="entry name" value="ABL9/DENND6_dom"/>
</dbReference>
<dbReference type="InterPro" id="IPR051731">
    <property type="entry name" value="DENND11/AVL9_GEFs"/>
</dbReference>
<dbReference type="InterPro" id="IPR037516">
    <property type="entry name" value="Tripartite_DENN"/>
</dbReference>
<dbReference type="PANTHER" id="PTHR31017:SF1">
    <property type="entry name" value="LATE SECRETORY PATHWAY PROTEIN AVL9 HOMOLOG"/>
    <property type="match status" value="1"/>
</dbReference>
<dbReference type="PANTHER" id="PTHR31017">
    <property type="entry name" value="LATE SECRETORY PATHWAY PROTEIN AVL9-RELATED"/>
    <property type="match status" value="1"/>
</dbReference>
<dbReference type="Pfam" id="PF09794">
    <property type="entry name" value="Avl9"/>
    <property type="match status" value="1"/>
</dbReference>
<dbReference type="PROSITE" id="PS50211">
    <property type="entry name" value="DENN"/>
    <property type="match status" value="1"/>
</dbReference>
<accession>Q5R991</accession>